<protein>
    <recommendedName>
        <fullName evidence="1">Epoxyqueuosine reductase QueH</fullName>
        <ecNumber evidence="1">1.17.99.6</ecNumber>
    </recommendedName>
    <alternativeName>
        <fullName evidence="1">Queuosine biosynthesis protein QueH</fullName>
    </alternativeName>
</protein>
<proteinExistence type="evidence at protein level"/>
<sequence>MNTELQPKLEKSAVNFQAKPRKQKIRKDPNAPFIREKLELPDGHNKLLLHSCCAPCSGEVMEAILASGIEFTIYFYNPNIHPLKEYLIRKEENIRFAKKFGIPFIDADYDRQNWFDRAKGMEWEPERGIRCTMCFDMRFEKAAEYAHKHGFPVFTSCLGISRWKDMNQINGCGHRAAEKYDDVIYWDYNWRKEGGSQRMIEISKRERFYQQEYCGCVYSLRDSNKWREETGRQKIEIGKLYYSAD</sequence>
<comment type="function">
    <text evidence="1">Catalyzes the conversion of epoxyqueuosine (oQ) to queuosine (Q), which is a hypermodified base found in the wobble positions of tRNA(Asp), tRNA(Asn), tRNA(His) and tRNA(Tyr).</text>
</comment>
<comment type="catalytic activity">
    <reaction evidence="1">
        <text>epoxyqueuosine(34) in tRNA + AH2 = queuosine(34) in tRNA + A + H2O</text>
        <dbReference type="Rhea" id="RHEA:32159"/>
        <dbReference type="Rhea" id="RHEA-COMP:18571"/>
        <dbReference type="Rhea" id="RHEA-COMP:18582"/>
        <dbReference type="ChEBI" id="CHEBI:13193"/>
        <dbReference type="ChEBI" id="CHEBI:15377"/>
        <dbReference type="ChEBI" id="CHEBI:17499"/>
        <dbReference type="ChEBI" id="CHEBI:194431"/>
        <dbReference type="ChEBI" id="CHEBI:194443"/>
        <dbReference type="EC" id="1.17.99.6"/>
    </reaction>
</comment>
<comment type="pathway">
    <text evidence="1">tRNA modification; tRNA-queuosine biosynthesis.</text>
</comment>
<comment type="similarity">
    <text evidence="1">Belongs to the QueH family.</text>
</comment>
<organism>
    <name type="scientific">Haemophilus influenzae (strain ATCC 51907 / DSM 11121 / KW20 / Rd)</name>
    <dbReference type="NCBI Taxonomy" id="71421"/>
    <lineage>
        <taxon>Bacteria</taxon>
        <taxon>Pseudomonadati</taxon>
        <taxon>Pseudomonadota</taxon>
        <taxon>Gammaproteobacteria</taxon>
        <taxon>Pasteurellales</taxon>
        <taxon>Pasteurellaceae</taxon>
        <taxon>Haemophilus</taxon>
    </lineage>
</organism>
<gene>
    <name evidence="1" type="primary">queH</name>
    <name type="ordered locus">HI_0882</name>
</gene>
<reference key="1">
    <citation type="journal article" date="1995" name="Science">
        <title>Whole-genome random sequencing and assembly of Haemophilus influenzae Rd.</title>
        <authorList>
            <person name="Fleischmann R.D."/>
            <person name="Adams M.D."/>
            <person name="White O."/>
            <person name="Clayton R.A."/>
            <person name="Kirkness E.F."/>
            <person name="Kerlavage A.R."/>
            <person name="Bult C.J."/>
            <person name="Tomb J.-F."/>
            <person name="Dougherty B.A."/>
            <person name="Merrick J.M."/>
            <person name="McKenney K."/>
            <person name="Sutton G.G."/>
            <person name="FitzHugh W."/>
            <person name="Fields C.A."/>
            <person name="Gocayne J.D."/>
            <person name="Scott J.D."/>
            <person name="Shirley R."/>
            <person name="Liu L.-I."/>
            <person name="Glodek A."/>
            <person name="Kelley J.M."/>
            <person name="Weidman J.F."/>
            <person name="Phillips C.A."/>
            <person name="Spriggs T."/>
            <person name="Hedblom E."/>
            <person name="Cotton M.D."/>
            <person name="Utterback T.R."/>
            <person name="Hanna M.C."/>
            <person name="Nguyen D.T."/>
            <person name="Saudek D.M."/>
            <person name="Brandon R.C."/>
            <person name="Fine L.D."/>
            <person name="Fritchman J.L."/>
            <person name="Fuhrmann J.L."/>
            <person name="Geoghagen N.S.M."/>
            <person name="Gnehm C.L."/>
            <person name="McDonald L.A."/>
            <person name="Small K.V."/>
            <person name="Fraser C.M."/>
            <person name="Smith H.O."/>
            <person name="Venter J.C."/>
        </authorList>
    </citation>
    <scope>NUCLEOTIDE SEQUENCE [LARGE SCALE GENOMIC DNA]</scope>
    <source>
        <strain>ATCC 51907 / DSM 11121 / KW20 / Rd</strain>
    </source>
</reference>
<reference key="2">
    <citation type="journal article" date="2000" name="Electrophoresis">
        <title>Two-dimensional map of the proteome of Haemophilus influenzae.</title>
        <authorList>
            <person name="Langen H."/>
            <person name="Takacs B."/>
            <person name="Evers S."/>
            <person name="Berndt P."/>
            <person name="Lahm H.W."/>
            <person name="Wipf B."/>
            <person name="Gray C."/>
            <person name="Fountoulakis M."/>
        </authorList>
    </citation>
    <scope>IDENTIFICATION BY MASS SPECTROMETRY</scope>
    <source>
        <strain>ATCC 51907 / DSM 11121 / KW20 / Rd</strain>
    </source>
</reference>
<dbReference type="EC" id="1.17.99.6" evidence="1"/>
<dbReference type="EMBL" id="L42023">
    <property type="protein sequence ID" value="AAC22546.1"/>
    <property type="molecule type" value="Genomic_DNA"/>
</dbReference>
<dbReference type="PIR" id="E64015">
    <property type="entry name" value="E64015"/>
</dbReference>
<dbReference type="RefSeq" id="NP_439043.1">
    <property type="nucleotide sequence ID" value="NC_000907.1"/>
</dbReference>
<dbReference type="SMR" id="P44068"/>
<dbReference type="STRING" id="71421.HI_0882"/>
<dbReference type="EnsemblBacteria" id="AAC22546">
    <property type="protein sequence ID" value="AAC22546"/>
    <property type="gene ID" value="HI_0882"/>
</dbReference>
<dbReference type="KEGG" id="hin:HI_0882"/>
<dbReference type="PATRIC" id="fig|71421.8.peg.924"/>
<dbReference type="eggNOG" id="COG1636">
    <property type="taxonomic scope" value="Bacteria"/>
</dbReference>
<dbReference type="HOGENOM" id="CLU_088177_0_0_6"/>
<dbReference type="OrthoDB" id="9801033at2"/>
<dbReference type="PhylomeDB" id="P44068"/>
<dbReference type="BioCyc" id="HINF71421:G1GJ1-922-MONOMER"/>
<dbReference type="UniPathway" id="UPA00392"/>
<dbReference type="Proteomes" id="UP000000579">
    <property type="component" value="Chromosome"/>
</dbReference>
<dbReference type="GO" id="GO:0051539">
    <property type="term" value="F:4 iron, 4 sulfur cluster binding"/>
    <property type="evidence" value="ECO:0007669"/>
    <property type="project" value="UniProtKB-UniRule"/>
</dbReference>
<dbReference type="GO" id="GO:0052693">
    <property type="term" value="F:epoxyqueuosine reductase activity"/>
    <property type="evidence" value="ECO:0007669"/>
    <property type="project" value="UniProtKB-UniRule"/>
</dbReference>
<dbReference type="GO" id="GO:0046872">
    <property type="term" value="F:metal ion binding"/>
    <property type="evidence" value="ECO:0007669"/>
    <property type="project" value="UniProtKB-KW"/>
</dbReference>
<dbReference type="GO" id="GO:0008616">
    <property type="term" value="P:queuosine biosynthetic process"/>
    <property type="evidence" value="ECO:0007669"/>
    <property type="project" value="UniProtKB-UniRule"/>
</dbReference>
<dbReference type="GO" id="GO:0006400">
    <property type="term" value="P:tRNA modification"/>
    <property type="evidence" value="ECO:0007669"/>
    <property type="project" value="UniProtKB-UniRule"/>
</dbReference>
<dbReference type="HAMAP" id="MF_02089">
    <property type="entry name" value="QueH"/>
    <property type="match status" value="1"/>
</dbReference>
<dbReference type="InterPro" id="IPR003828">
    <property type="entry name" value="QueH"/>
</dbReference>
<dbReference type="PANTHER" id="PTHR36701">
    <property type="entry name" value="EPOXYQUEUOSINE REDUCTASE QUEH"/>
    <property type="match status" value="1"/>
</dbReference>
<dbReference type="PANTHER" id="PTHR36701:SF1">
    <property type="entry name" value="EPOXYQUEUOSINE REDUCTASE QUEH"/>
    <property type="match status" value="1"/>
</dbReference>
<dbReference type="Pfam" id="PF02677">
    <property type="entry name" value="QueH"/>
    <property type="match status" value="1"/>
</dbReference>
<dbReference type="SUPFAM" id="SSF52402">
    <property type="entry name" value="Adenine nucleotide alpha hydrolases-like"/>
    <property type="match status" value="1"/>
</dbReference>
<keyword id="KW-0004">4Fe-4S</keyword>
<keyword id="KW-1015">Disulfide bond</keyword>
<keyword id="KW-0408">Iron</keyword>
<keyword id="KW-0411">Iron-sulfur</keyword>
<keyword id="KW-0479">Metal-binding</keyword>
<keyword id="KW-0560">Oxidoreductase</keyword>
<keyword id="KW-0671">Queuosine biosynthesis</keyword>
<keyword id="KW-0676">Redox-active center</keyword>
<keyword id="KW-1185">Reference proteome</keyword>
<keyword id="KW-0819">tRNA processing</keyword>
<feature type="chain" id="PRO_0000077968" description="Epoxyqueuosine reductase QueH">
    <location>
        <begin position="1"/>
        <end position="245"/>
    </location>
</feature>
<feature type="binding site" evidence="1">
    <location>
        <position position="52"/>
    </location>
    <ligand>
        <name>[4Fe-4S] cluster</name>
        <dbReference type="ChEBI" id="CHEBI:49883"/>
    </ligand>
</feature>
<feature type="binding site" evidence="1">
    <location>
        <position position="53"/>
    </location>
    <ligand>
        <name>[4Fe-4S] cluster</name>
        <dbReference type="ChEBI" id="CHEBI:49883"/>
    </ligand>
</feature>
<feature type="binding site" evidence="1">
    <location>
        <position position="131"/>
    </location>
    <ligand>
        <name>[4Fe-4S] cluster</name>
        <dbReference type="ChEBI" id="CHEBI:49883"/>
    </ligand>
</feature>
<feature type="binding site" evidence="1">
    <location>
        <position position="134"/>
    </location>
    <ligand>
        <name>[4Fe-4S] cluster</name>
        <dbReference type="ChEBI" id="CHEBI:49883"/>
    </ligand>
</feature>
<feature type="disulfide bond" description="Redox-active" evidence="1">
    <location>
        <begin position="214"/>
        <end position="216"/>
    </location>
</feature>
<name>QUEH_HAEIN</name>
<evidence type="ECO:0000255" key="1">
    <source>
        <dbReference type="HAMAP-Rule" id="MF_02089"/>
    </source>
</evidence>
<accession>P44068</accession>